<proteinExistence type="inferred from homology"/>
<organism>
    <name type="scientific">Dehalococcoides mccartyi (strain ATCC BAA-2266 / KCTC 15142 / 195)</name>
    <name type="common">Dehalococcoides ethenogenes (strain 195)</name>
    <dbReference type="NCBI Taxonomy" id="243164"/>
    <lineage>
        <taxon>Bacteria</taxon>
        <taxon>Bacillati</taxon>
        <taxon>Chloroflexota</taxon>
        <taxon>Dehalococcoidia</taxon>
        <taxon>Dehalococcoidales</taxon>
        <taxon>Dehalococcoidaceae</taxon>
        <taxon>Dehalococcoides</taxon>
    </lineage>
</organism>
<feature type="chain" id="PRO_1000147298" description="Nucleotide-binding protein DET1318">
    <location>
        <begin position="1"/>
        <end position="163"/>
    </location>
</feature>
<keyword id="KW-0547">Nucleotide-binding</keyword>
<sequence length="163" mass="18461">MPSLDVVSVVDMQAMDNAVNNAKRDLGNRYDFKNAKYELVLNRKDKKIEIVAEDEFKLKAIIETLIQQCVRFKLDSKCLDVADAHTVSLGAAKTEIKIKDGLTKETASKITKFIKSTKLKLDSAIQGEQIRITGKQIDDLQEIMQLLNGQDFDVPLQYVNMKR</sequence>
<protein>
    <recommendedName>
        <fullName evidence="1">Nucleotide-binding protein DET1318</fullName>
    </recommendedName>
</protein>
<name>Y1318_DEHM1</name>
<reference key="1">
    <citation type="journal article" date="2005" name="Science">
        <title>Genome sequence of the PCE-dechlorinating bacterium Dehalococcoides ethenogenes.</title>
        <authorList>
            <person name="Seshadri R."/>
            <person name="Adrian L."/>
            <person name="Fouts D.E."/>
            <person name="Eisen J.A."/>
            <person name="Phillippy A.M."/>
            <person name="Methe B.A."/>
            <person name="Ward N.L."/>
            <person name="Nelson W.C."/>
            <person name="DeBoy R.T."/>
            <person name="Khouri H.M."/>
            <person name="Kolonay J.F."/>
            <person name="Dodson R.J."/>
            <person name="Daugherty S.C."/>
            <person name="Brinkac L.M."/>
            <person name="Sullivan S.A."/>
            <person name="Madupu R."/>
            <person name="Nelson K.E."/>
            <person name="Kang K.H."/>
            <person name="Impraim M."/>
            <person name="Tran K."/>
            <person name="Robinson J.M."/>
            <person name="Forberger H.A."/>
            <person name="Fraser C.M."/>
            <person name="Zinder S.H."/>
            <person name="Heidelberg J.F."/>
        </authorList>
    </citation>
    <scope>NUCLEOTIDE SEQUENCE [LARGE SCALE GENOMIC DNA]</scope>
    <source>
        <strain>ATCC BAA-2266 / KCTC 15142 / 195</strain>
    </source>
</reference>
<gene>
    <name type="ordered locus">DET1318</name>
</gene>
<accession>Q3Z6X0</accession>
<evidence type="ECO:0000255" key="1">
    <source>
        <dbReference type="HAMAP-Rule" id="MF_00632"/>
    </source>
</evidence>
<dbReference type="EMBL" id="CP000027">
    <property type="protein sequence ID" value="AAW39476.1"/>
    <property type="molecule type" value="Genomic_DNA"/>
</dbReference>
<dbReference type="RefSeq" id="WP_010937006.1">
    <property type="nucleotide sequence ID" value="NC_002936.3"/>
</dbReference>
<dbReference type="SMR" id="Q3Z6X0"/>
<dbReference type="FunCoup" id="Q3Z6X0">
    <property type="interactions" value="68"/>
</dbReference>
<dbReference type="STRING" id="243164.DET1318"/>
<dbReference type="GeneID" id="3229436"/>
<dbReference type="KEGG" id="det:DET1318"/>
<dbReference type="eggNOG" id="COG1666">
    <property type="taxonomic scope" value="Bacteria"/>
</dbReference>
<dbReference type="HOGENOM" id="CLU_099839_1_0_0"/>
<dbReference type="InParanoid" id="Q3Z6X0"/>
<dbReference type="Proteomes" id="UP000008289">
    <property type="component" value="Chromosome"/>
</dbReference>
<dbReference type="GO" id="GO:0005829">
    <property type="term" value="C:cytosol"/>
    <property type="evidence" value="ECO:0007669"/>
    <property type="project" value="TreeGrafter"/>
</dbReference>
<dbReference type="GO" id="GO:0000166">
    <property type="term" value="F:nucleotide binding"/>
    <property type="evidence" value="ECO:0007669"/>
    <property type="project" value="TreeGrafter"/>
</dbReference>
<dbReference type="CDD" id="cd11740">
    <property type="entry name" value="YajQ_like"/>
    <property type="match status" value="1"/>
</dbReference>
<dbReference type="Gene3D" id="3.30.70.860">
    <property type="match status" value="1"/>
</dbReference>
<dbReference type="Gene3D" id="3.30.70.990">
    <property type="entry name" value="YajQ-like, domain 2"/>
    <property type="match status" value="1"/>
</dbReference>
<dbReference type="HAMAP" id="MF_00632">
    <property type="entry name" value="YajQ"/>
    <property type="match status" value="1"/>
</dbReference>
<dbReference type="InterPro" id="IPR007551">
    <property type="entry name" value="DUF520"/>
</dbReference>
<dbReference type="InterPro" id="IPR035571">
    <property type="entry name" value="UPF0234-like_C"/>
</dbReference>
<dbReference type="InterPro" id="IPR035570">
    <property type="entry name" value="UPF0234_N"/>
</dbReference>
<dbReference type="InterPro" id="IPR036183">
    <property type="entry name" value="YajQ-like_sf"/>
</dbReference>
<dbReference type="NCBIfam" id="NF003819">
    <property type="entry name" value="PRK05412.1"/>
    <property type="match status" value="1"/>
</dbReference>
<dbReference type="PANTHER" id="PTHR30476">
    <property type="entry name" value="UPF0234 PROTEIN YAJQ"/>
    <property type="match status" value="1"/>
</dbReference>
<dbReference type="PANTHER" id="PTHR30476:SF0">
    <property type="entry name" value="UPF0234 PROTEIN YAJQ"/>
    <property type="match status" value="1"/>
</dbReference>
<dbReference type="Pfam" id="PF04461">
    <property type="entry name" value="DUF520"/>
    <property type="match status" value="1"/>
</dbReference>
<dbReference type="SUPFAM" id="SSF89963">
    <property type="entry name" value="YajQ-like"/>
    <property type="match status" value="2"/>
</dbReference>
<comment type="function">
    <text evidence="1">Nucleotide-binding protein.</text>
</comment>
<comment type="similarity">
    <text evidence="1">Belongs to the YajQ family.</text>
</comment>